<reference key="1">
    <citation type="journal article" date="1994" name="EMBO J.">
        <title>Complete DNA sequence of yeast chromosome II.</title>
        <authorList>
            <person name="Feldmann H."/>
            <person name="Aigle M."/>
            <person name="Aljinovic G."/>
            <person name="Andre B."/>
            <person name="Baclet M.C."/>
            <person name="Barthe C."/>
            <person name="Baur A."/>
            <person name="Becam A.-M."/>
            <person name="Biteau N."/>
            <person name="Boles E."/>
            <person name="Brandt T."/>
            <person name="Brendel M."/>
            <person name="Brueckner M."/>
            <person name="Bussereau F."/>
            <person name="Christiansen C."/>
            <person name="Contreras R."/>
            <person name="Crouzet M."/>
            <person name="Cziepluch C."/>
            <person name="Demolis N."/>
            <person name="Delaveau T."/>
            <person name="Doignon F."/>
            <person name="Domdey H."/>
            <person name="Duesterhus S."/>
            <person name="Dubois E."/>
            <person name="Dujon B."/>
            <person name="El Bakkoury M."/>
            <person name="Entian K.-D."/>
            <person name="Feuermann M."/>
            <person name="Fiers W."/>
            <person name="Fobo G.M."/>
            <person name="Fritz C."/>
            <person name="Gassenhuber J."/>
            <person name="Glansdorff N."/>
            <person name="Goffeau A."/>
            <person name="Grivell L.A."/>
            <person name="de Haan M."/>
            <person name="Hein C."/>
            <person name="Herbert C.J."/>
            <person name="Hollenberg C.P."/>
            <person name="Holmstroem K."/>
            <person name="Jacq C."/>
            <person name="Jacquet M."/>
            <person name="Jauniaux J.-C."/>
            <person name="Jonniaux J.-L."/>
            <person name="Kallesoee T."/>
            <person name="Kiesau P."/>
            <person name="Kirchrath L."/>
            <person name="Koetter P."/>
            <person name="Korol S."/>
            <person name="Liebl S."/>
            <person name="Logghe M."/>
            <person name="Lohan A.J.E."/>
            <person name="Louis E.J."/>
            <person name="Li Z.Y."/>
            <person name="Maat M.J."/>
            <person name="Mallet L."/>
            <person name="Mannhaupt G."/>
            <person name="Messenguy F."/>
            <person name="Miosga T."/>
            <person name="Molemans F."/>
            <person name="Mueller S."/>
            <person name="Nasr F."/>
            <person name="Obermaier B."/>
            <person name="Perea J."/>
            <person name="Pierard A."/>
            <person name="Piravandi E."/>
            <person name="Pohl F.M."/>
            <person name="Pohl T.M."/>
            <person name="Potier S."/>
            <person name="Proft M."/>
            <person name="Purnelle B."/>
            <person name="Ramezani Rad M."/>
            <person name="Rieger M."/>
            <person name="Rose M."/>
            <person name="Schaaff-Gerstenschlaeger I."/>
            <person name="Scherens B."/>
            <person name="Schwarzlose C."/>
            <person name="Skala J."/>
            <person name="Slonimski P.P."/>
            <person name="Smits P.H.M."/>
            <person name="Souciet J.-L."/>
            <person name="Steensma H.Y."/>
            <person name="Stucka R."/>
            <person name="Urrestarazu L.A."/>
            <person name="van der Aart Q.J.M."/>
            <person name="Van Dyck L."/>
            <person name="Vassarotti A."/>
            <person name="Vetter I."/>
            <person name="Vierendeels F."/>
            <person name="Vissers S."/>
            <person name="Wagner G."/>
            <person name="de Wergifosse P."/>
            <person name="Wolfe K.H."/>
            <person name="Zagulski M."/>
            <person name="Zimmermann F.K."/>
            <person name="Mewes H.-W."/>
            <person name="Kleine K."/>
        </authorList>
    </citation>
    <scope>NUCLEOTIDE SEQUENCE [LARGE SCALE GENOMIC DNA]</scope>
    <source>
        <strain>ATCC 204508 / S288c</strain>
    </source>
</reference>
<reference key="2">
    <citation type="journal article" date="2014" name="G3 (Bethesda)">
        <title>The reference genome sequence of Saccharomyces cerevisiae: Then and now.</title>
        <authorList>
            <person name="Engel S.R."/>
            <person name="Dietrich F.S."/>
            <person name="Fisk D.G."/>
            <person name="Binkley G."/>
            <person name="Balakrishnan R."/>
            <person name="Costanzo M.C."/>
            <person name="Dwight S.S."/>
            <person name="Hitz B.C."/>
            <person name="Karra K."/>
            <person name="Nash R.S."/>
            <person name="Weng S."/>
            <person name="Wong E.D."/>
            <person name="Lloyd P."/>
            <person name="Skrzypek M.S."/>
            <person name="Miyasato S.R."/>
            <person name="Simison M."/>
            <person name="Cherry J.M."/>
        </authorList>
    </citation>
    <scope>GENOME REANNOTATION</scope>
    <source>
        <strain>ATCC 204508 / S288c</strain>
    </source>
</reference>
<reference key="3">
    <citation type="journal article" date="2002" name="Nat. Biotechnol.">
        <title>An integrated approach for finding overlooked genes in yeast.</title>
        <authorList>
            <person name="Kumar A."/>
            <person name="Harrison P.M."/>
            <person name="Cheung K.-H."/>
            <person name="Lan N."/>
            <person name="Echols N."/>
            <person name="Bertone P."/>
            <person name="Miller P."/>
            <person name="Gerstein M.B."/>
            <person name="Snyder M."/>
        </authorList>
    </citation>
    <scope>NUCLEOTIDE SEQUENCE [GENOMIC DNA]</scope>
</reference>
<proteinExistence type="uncertain"/>
<organism>
    <name type="scientific">Saccharomyces cerevisiae (strain ATCC 204508 / S288c)</name>
    <name type="common">Baker's yeast</name>
    <dbReference type="NCBI Taxonomy" id="559292"/>
    <lineage>
        <taxon>Eukaryota</taxon>
        <taxon>Fungi</taxon>
        <taxon>Dikarya</taxon>
        <taxon>Ascomycota</taxon>
        <taxon>Saccharomycotina</taxon>
        <taxon>Saccharomycetes</taxon>
        <taxon>Saccharomycetales</taxon>
        <taxon>Saccharomycetaceae</taxon>
        <taxon>Saccharomyces</taxon>
    </lineage>
</organism>
<feature type="chain" id="PRO_0000299795" description="Putative uncharacterized protein YBR141W-A">
    <location>
        <begin position="1"/>
        <end position="31"/>
    </location>
</feature>
<dbReference type="EMBL" id="Z36010">
    <property type="status" value="NOT_ANNOTATED_CDS"/>
    <property type="molecule type" value="Genomic_DNA"/>
</dbReference>
<dbReference type="EMBL" id="AF479934">
    <property type="protein sequence ID" value="AAL79247.1"/>
    <property type="molecule type" value="Genomic_DNA"/>
</dbReference>
<dbReference type="SMR" id="Q8TGQ4"/>
<dbReference type="STRING" id="4932.YBR141W-A"/>
<dbReference type="PaxDb" id="4932-YBR141W-A"/>
<dbReference type="EnsemblFungi" id="YBR141W-A_mRNA">
    <property type="protein sequence ID" value="YBR141W-A"/>
    <property type="gene ID" value="YBR141W-A"/>
</dbReference>
<dbReference type="AGR" id="SGD:S000028602"/>
<dbReference type="SGD" id="S000028602">
    <property type="gene designation" value="YBR141W-A"/>
</dbReference>
<dbReference type="HOGENOM" id="CLU_3399668_0_0_1"/>
<protein>
    <recommendedName>
        <fullName>Putative uncharacterized protein YBR141W-A</fullName>
    </recommendedName>
</protein>
<gene>
    <name type="ordered locus">YBR141W-A</name>
</gene>
<name>YB141_YEAST</name>
<accession>Q8TGQ4</accession>
<evidence type="ECO:0000305" key="1"/>
<evidence type="ECO:0000305" key="2">
    <source>
    </source>
</evidence>
<sequence length="31" mass="3562">MSPIEPRRFCNSVLSQYLECVTQACGRTIKM</sequence>
<comment type="miscellaneous">
    <text evidence="1">Completely overlaps YBR141C.</text>
</comment>
<comment type="caution">
    <text evidence="2">Product of a dubious gene prediction unlikely to encode a functional protein. Because of that it is not part of the S.cerevisiae S288c complete/reference proteome set.</text>
</comment>